<proteinExistence type="inferred from homology"/>
<feature type="chain" id="PRO_0000140316" description="Peptide methionine sulfoxide reductase MsrB">
    <location>
        <begin position="1"/>
        <end position="155"/>
    </location>
</feature>
<feature type="domain" description="MsrB" evidence="2">
    <location>
        <begin position="15"/>
        <end position="137"/>
    </location>
</feature>
<feature type="active site" description="Nucleophile" evidence="2">
    <location>
        <position position="126"/>
    </location>
</feature>
<feature type="binding site" evidence="2">
    <location>
        <position position="54"/>
    </location>
    <ligand>
        <name>Zn(2+)</name>
        <dbReference type="ChEBI" id="CHEBI:29105"/>
    </ligand>
</feature>
<feature type="binding site" evidence="2">
    <location>
        <position position="57"/>
    </location>
    <ligand>
        <name>Zn(2+)</name>
        <dbReference type="ChEBI" id="CHEBI:29105"/>
    </ligand>
</feature>
<feature type="binding site" evidence="2">
    <location>
        <position position="103"/>
    </location>
    <ligand>
        <name>Zn(2+)</name>
        <dbReference type="ChEBI" id="CHEBI:29105"/>
    </ligand>
</feature>
<feature type="binding site" evidence="2">
    <location>
        <position position="106"/>
    </location>
    <ligand>
        <name>Zn(2+)</name>
        <dbReference type="ChEBI" id="CHEBI:29105"/>
    </ligand>
</feature>
<protein>
    <recommendedName>
        <fullName evidence="1">Peptide methionine sulfoxide reductase MsrB</fullName>
        <ecNumber evidence="1">1.8.4.12</ecNumber>
    </recommendedName>
    <alternativeName>
        <fullName evidence="1">Peptide-methionine (R)-S-oxide reductase</fullName>
    </alternativeName>
</protein>
<sequence>MNVAFDLTPPSPSQREALIATLNAEEHRILLQHGTEAPFCNRLLDNNQLGTYTCRFCGLPLFHSNAKFKSGTGWPSFFEPYTHAHIRKQHDTSHGMIRTEILCARCNSHLGHLFPDGPPPTYERYCLNSVSLTFIPTGTLLPDQLHRGDNTAYRT</sequence>
<evidence type="ECO:0000255" key="1">
    <source>
        <dbReference type="HAMAP-Rule" id="MF_01400"/>
    </source>
</evidence>
<evidence type="ECO:0000255" key="2">
    <source>
        <dbReference type="PROSITE-ProRule" id="PRU01126"/>
    </source>
</evidence>
<reference key="1">
    <citation type="journal article" date="2000" name="Nature">
        <title>The genome sequence of the plant pathogen Xylella fastidiosa.</title>
        <authorList>
            <person name="Simpson A.J.G."/>
            <person name="Reinach F.C."/>
            <person name="Arruda P."/>
            <person name="Abreu F.A."/>
            <person name="Acencio M."/>
            <person name="Alvarenga R."/>
            <person name="Alves L.M.C."/>
            <person name="Araya J.E."/>
            <person name="Baia G.S."/>
            <person name="Baptista C.S."/>
            <person name="Barros M.H."/>
            <person name="Bonaccorsi E.D."/>
            <person name="Bordin S."/>
            <person name="Bove J.M."/>
            <person name="Briones M.R.S."/>
            <person name="Bueno M.R.P."/>
            <person name="Camargo A.A."/>
            <person name="Camargo L.E.A."/>
            <person name="Carraro D.M."/>
            <person name="Carrer H."/>
            <person name="Colauto N.B."/>
            <person name="Colombo C."/>
            <person name="Costa F.F."/>
            <person name="Costa M.C.R."/>
            <person name="Costa-Neto C.M."/>
            <person name="Coutinho L.L."/>
            <person name="Cristofani M."/>
            <person name="Dias-Neto E."/>
            <person name="Docena C."/>
            <person name="El-Dorry H."/>
            <person name="Facincani A.P."/>
            <person name="Ferreira A.J.S."/>
            <person name="Ferreira V.C.A."/>
            <person name="Ferro J.A."/>
            <person name="Fraga J.S."/>
            <person name="Franca S.C."/>
            <person name="Franco M.C."/>
            <person name="Frohme M."/>
            <person name="Furlan L.R."/>
            <person name="Garnier M."/>
            <person name="Goldman G.H."/>
            <person name="Goldman M.H.S."/>
            <person name="Gomes S.L."/>
            <person name="Gruber A."/>
            <person name="Ho P.L."/>
            <person name="Hoheisel J.D."/>
            <person name="Junqueira M.L."/>
            <person name="Kemper E.L."/>
            <person name="Kitajima J.P."/>
            <person name="Krieger J.E."/>
            <person name="Kuramae E.E."/>
            <person name="Laigret F."/>
            <person name="Lambais M.R."/>
            <person name="Leite L.C.C."/>
            <person name="Lemos E.G.M."/>
            <person name="Lemos M.V.F."/>
            <person name="Lopes S.A."/>
            <person name="Lopes C.R."/>
            <person name="Machado J.A."/>
            <person name="Machado M.A."/>
            <person name="Madeira A.M.B.N."/>
            <person name="Madeira H.M.F."/>
            <person name="Marino C.L."/>
            <person name="Marques M.V."/>
            <person name="Martins E.A.L."/>
            <person name="Martins E.M.F."/>
            <person name="Matsukuma A.Y."/>
            <person name="Menck C.F.M."/>
            <person name="Miracca E.C."/>
            <person name="Miyaki C.Y."/>
            <person name="Monteiro-Vitorello C.B."/>
            <person name="Moon D.H."/>
            <person name="Nagai M.A."/>
            <person name="Nascimento A.L.T.O."/>
            <person name="Netto L.E.S."/>
            <person name="Nhani A. Jr."/>
            <person name="Nobrega F.G."/>
            <person name="Nunes L.R."/>
            <person name="Oliveira M.A."/>
            <person name="de Oliveira M.C."/>
            <person name="de Oliveira R.C."/>
            <person name="Palmieri D.A."/>
            <person name="Paris A."/>
            <person name="Peixoto B.R."/>
            <person name="Pereira G.A.G."/>
            <person name="Pereira H.A. Jr."/>
            <person name="Pesquero J.B."/>
            <person name="Quaggio R.B."/>
            <person name="Roberto P.G."/>
            <person name="Rodrigues V."/>
            <person name="de Rosa A.J.M."/>
            <person name="de Rosa V.E. Jr."/>
            <person name="de Sa R.G."/>
            <person name="Santelli R.V."/>
            <person name="Sawasaki H.E."/>
            <person name="da Silva A.C.R."/>
            <person name="da Silva A.M."/>
            <person name="da Silva F.R."/>
            <person name="Silva W.A. Jr."/>
            <person name="da Silveira J.F."/>
            <person name="Silvestri M.L.Z."/>
            <person name="Siqueira W.J."/>
            <person name="de Souza A.A."/>
            <person name="de Souza A.P."/>
            <person name="Terenzi M.F."/>
            <person name="Truffi D."/>
            <person name="Tsai S.M."/>
            <person name="Tsuhako M.H."/>
            <person name="Vallada H."/>
            <person name="Van Sluys M.A."/>
            <person name="Verjovski-Almeida S."/>
            <person name="Vettore A.L."/>
            <person name="Zago M.A."/>
            <person name="Zatz M."/>
            <person name="Meidanis J."/>
            <person name="Setubal J.C."/>
        </authorList>
    </citation>
    <scope>NUCLEOTIDE SEQUENCE [LARGE SCALE GENOMIC DNA]</scope>
    <source>
        <strain>9a5c</strain>
    </source>
</reference>
<keyword id="KW-0479">Metal-binding</keyword>
<keyword id="KW-0560">Oxidoreductase</keyword>
<keyword id="KW-0862">Zinc</keyword>
<organism>
    <name type="scientific">Xylella fastidiosa (strain 9a5c)</name>
    <dbReference type="NCBI Taxonomy" id="160492"/>
    <lineage>
        <taxon>Bacteria</taxon>
        <taxon>Pseudomonadati</taxon>
        <taxon>Pseudomonadota</taxon>
        <taxon>Gammaproteobacteria</taxon>
        <taxon>Lysobacterales</taxon>
        <taxon>Lysobacteraceae</taxon>
        <taxon>Xylella</taxon>
    </lineage>
</organism>
<name>MSRB_XYLFA</name>
<dbReference type="EC" id="1.8.4.12" evidence="1"/>
<dbReference type="EMBL" id="AE003849">
    <property type="protein sequence ID" value="AAF83659.1"/>
    <property type="molecule type" value="Genomic_DNA"/>
</dbReference>
<dbReference type="PIR" id="D82755">
    <property type="entry name" value="D82755"/>
</dbReference>
<dbReference type="RefSeq" id="WP_010893369.1">
    <property type="nucleotide sequence ID" value="NC_002488.3"/>
</dbReference>
<dbReference type="SMR" id="Q9PF29"/>
<dbReference type="STRING" id="160492.XF_0849"/>
<dbReference type="KEGG" id="xfa:XF_0849"/>
<dbReference type="eggNOG" id="COG0229">
    <property type="taxonomic scope" value="Bacteria"/>
</dbReference>
<dbReference type="HOGENOM" id="CLU_031040_8_5_6"/>
<dbReference type="Proteomes" id="UP000000812">
    <property type="component" value="Chromosome"/>
</dbReference>
<dbReference type="GO" id="GO:0005737">
    <property type="term" value="C:cytoplasm"/>
    <property type="evidence" value="ECO:0007669"/>
    <property type="project" value="TreeGrafter"/>
</dbReference>
<dbReference type="GO" id="GO:0033743">
    <property type="term" value="F:peptide-methionine (R)-S-oxide reductase activity"/>
    <property type="evidence" value="ECO:0007669"/>
    <property type="project" value="UniProtKB-UniRule"/>
</dbReference>
<dbReference type="GO" id="GO:0008270">
    <property type="term" value="F:zinc ion binding"/>
    <property type="evidence" value="ECO:0007669"/>
    <property type="project" value="UniProtKB-UniRule"/>
</dbReference>
<dbReference type="GO" id="GO:0030091">
    <property type="term" value="P:protein repair"/>
    <property type="evidence" value="ECO:0007669"/>
    <property type="project" value="InterPro"/>
</dbReference>
<dbReference type="GO" id="GO:0006979">
    <property type="term" value="P:response to oxidative stress"/>
    <property type="evidence" value="ECO:0007669"/>
    <property type="project" value="InterPro"/>
</dbReference>
<dbReference type="FunFam" id="2.170.150.20:FF:000001">
    <property type="entry name" value="Peptide methionine sulfoxide reductase MsrB"/>
    <property type="match status" value="1"/>
</dbReference>
<dbReference type="Gene3D" id="2.170.150.20">
    <property type="entry name" value="Peptide methionine sulfoxide reductase"/>
    <property type="match status" value="1"/>
</dbReference>
<dbReference type="HAMAP" id="MF_01400">
    <property type="entry name" value="MsrB"/>
    <property type="match status" value="1"/>
</dbReference>
<dbReference type="InterPro" id="IPR028427">
    <property type="entry name" value="Met_Sox_Rdtase_MsrB"/>
</dbReference>
<dbReference type="InterPro" id="IPR002579">
    <property type="entry name" value="Met_Sox_Rdtase_MsrB_dom"/>
</dbReference>
<dbReference type="InterPro" id="IPR011057">
    <property type="entry name" value="Mss4-like_sf"/>
</dbReference>
<dbReference type="NCBIfam" id="TIGR00357">
    <property type="entry name" value="peptide-methionine (R)-S-oxide reductase MsrB"/>
    <property type="match status" value="1"/>
</dbReference>
<dbReference type="PANTHER" id="PTHR10173">
    <property type="entry name" value="METHIONINE SULFOXIDE REDUCTASE"/>
    <property type="match status" value="1"/>
</dbReference>
<dbReference type="PANTHER" id="PTHR10173:SF52">
    <property type="entry name" value="METHIONINE-R-SULFOXIDE REDUCTASE B1"/>
    <property type="match status" value="1"/>
</dbReference>
<dbReference type="Pfam" id="PF01641">
    <property type="entry name" value="SelR"/>
    <property type="match status" value="1"/>
</dbReference>
<dbReference type="SUPFAM" id="SSF51316">
    <property type="entry name" value="Mss4-like"/>
    <property type="match status" value="1"/>
</dbReference>
<dbReference type="PROSITE" id="PS51790">
    <property type="entry name" value="MSRB"/>
    <property type="match status" value="1"/>
</dbReference>
<accession>Q9PF29</accession>
<comment type="catalytic activity">
    <reaction evidence="1">
        <text>L-methionyl-[protein] + [thioredoxin]-disulfide + H2O = L-methionyl-(R)-S-oxide-[protein] + [thioredoxin]-dithiol</text>
        <dbReference type="Rhea" id="RHEA:24164"/>
        <dbReference type="Rhea" id="RHEA-COMP:10698"/>
        <dbReference type="Rhea" id="RHEA-COMP:10700"/>
        <dbReference type="Rhea" id="RHEA-COMP:12313"/>
        <dbReference type="Rhea" id="RHEA-COMP:12314"/>
        <dbReference type="ChEBI" id="CHEBI:15377"/>
        <dbReference type="ChEBI" id="CHEBI:16044"/>
        <dbReference type="ChEBI" id="CHEBI:29950"/>
        <dbReference type="ChEBI" id="CHEBI:45764"/>
        <dbReference type="ChEBI" id="CHEBI:50058"/>
        <dbReference type="EC" id="1.8.4.12"/>
    </reaction>
</comment>
<comment type="cofactor">
    <cofactor evidence="1">
        <name>Zn(2+)</name>
        <dbReference type="ChEBI" id="CHEBI:29105"/>
    </cofactor>
    <text evidence="1">Binds 1 zinc ion per subunit. The zinc ion is important for the structural integrity of the protein.</text>
</comment>
<comment type="similarity">
    <text evidence="1">Belongs to the MsrB Met sulfoxide reductase family.</text>
</comment>
<gene>
    <name evidence="1" type="primary">msrB</name>
    <name type="ordered locus">XF_0849</name>
</gene>